<proteinExistence type="inferred from homology"/>
<protein>
    <recommendedName>
        <fullName>Avenin-like b11</fullName>
    </recommendedName>
</protein>
<comment type="function">
    <text evidence="1">Seed storage protein. Might be integrated via inter-chain disulfide bonds within the glutenin polymer (By similarity).</text>
</comment>
<comment type="PTM">
    <text evidence="3">Contains disulfide bonds.</text>
</comment>
<comment type="similarity">
    <text evidence="3">Belongs to the prolamin family.</text>
</comment>
<name>AVLBB_WHEAT</name>
<reference key="1">
    <citation type="submission" date="2008-12" db="EMBL/GenBank/DDBJ databases">
        <title>Novel cysteine-rich avenin-like seed storage protein gene in wheat.</title>
        <authorList>
            <person name="Chen P."/>
            <person name="Li R."/>
            <person name="He G."/>
            <person name="Shewry P.R."/>
            <person name="Zhou R."/>
            <person name="Guan H."/>
            <person name="Jin G."/>
            <person name="Zhang J."/>
        </authorList>
    </citation>
    <scope>NUCLEOTIDE SEQUENCE [GENOMIC DNA]</scope>
    <source>
        <strain>cv. Emai 12</strain>
    </source>
</reference>
<dbReference type="EMBL" id="FJ529695">
    <property type="protein sequence ID" value="ACL80335.1"/>
    <property type="molecule type" value="Genomic_DNA"/>
</dbReference>
<dbReference type="SMR" id="B8YG97"/>
<dbReference type="Proteomes" id="UP000019116">
    <property type="component" value="Unplaced"/>
</dbReference>
<dbReference type="ExpressionAtlas" id="B8YG97">
    <property type="expression patterns" value="baseline and differential"/>
</dbReference>
<dbReference type="GO" id="GO:0045735">
    <property type="term" value="F:nutrient reservoir activity"/>
    <property type="evidence" value="ECO:0007669"/>
    <property type="project" value="UniProtKB-KW"/>
</dbReference>
<dbReference type="CDD" id="cd00261">
    <property type="entry name" value="AAI_SS"/>
    <property type="match status" value="2"/>
</dbReference>
<dbReference type="Gene3D" id="1.10.110.10">
    <property type="entry name" value="Plant lipid-transfer and hydrophobic proteins"/>
    <property type="match status" value="2"/>
</dbReference>
<dbReference type="InterPro" id="IPR036312">
    <property type="entry name" value="Bifun_inhib/LTP/seed_sf"/>
</dbReference>
<dbReference type="InterPro" id="IPR016140">
    <property type="entry name" value="Bifunc_inhib/LTP/seed_store"/>
</dbReference>
<dbReference type="InterPro" id="IPR001954">
    <property type="entry name" value="Glia_glutenin"/>
</dbReference>
<dbReference type="PANTHER" id="PTHR33454:SF11">
    <property type="entry name" value="AVENIN-LIKE B5"/>
    <property type="match status" value="1"/>
</dbReference>
<dbReference type="PANTHER" id="PTHR33454">
    <property type="entry name" value="PROLAMIN PPROL 14P"/>
    <property type="match status" value="1"/>
</dbReference>
<dbReference type="Pfam" id="PF13016">
    <property type="entry name" value="Gliadin"/>
    <property type="match status" value="2"/>
</dbReference>
<dbReference type="PRINTS" id="PR00208">
    <property type="entry name" value="GLIADGLUTEN"/>
</dbReference>
<dbReference type="PRINTS" id="PR00209">
    <property type="entry name" value="GLIADIN"/>
</dbReference>
<dbReference type="SMART" id="SM00499">
    <property type="entry name" value="AAI"/>
    <property type="match status" value="2"/>
</dbReference>
<dbReference type="SUPFAM" id="SSF47699">
    <property type="entry name" value="Bifunctional inhibitor/lipid-transfer protein/seed storage 2S albumin"/>
    <property type="match status" value="2"/>
</dbReference>
<organism>
    <name type="scientific">Triticum aestivum</name>
    <name type="common">Wheat</name>
    <dbReference type="NCBI Taxonomy" id="4565"/>
    <lineage>
        <taxon>Eukaryota</taxon>
        <taxon>Viridiplantae</taxon>
        <taxon>Streptophyta</taxon>
        <taxon>Embryophyta</taxon>
        <taxon>Tracheophyta</taxon>
        <taxon>Spermatophyta</taxon>
        <taxon>Magnoliopsida</taxon>
        <taxon>Liliopsida</taxon>
        <taxon>Poales</taxon>
        <taxon>Poaceae</taxon>
        <taxon>BOP clade</taxon>
        <taxon>Pooideae</taxon>
        <taxon>Triticodae</taxon>
        <taxon>Triticeae</taxon>
        <taxon>Triticinae</taxon>
        <taxon>Triticum</taxon>
    </lineage>
</organism>
<keyword id="KW-1015">Disulfide bond</keyword>
<keyword id="KW-1185">Reference proteome</keyword>
<keyword id="KW-0708">Seed storage protein</keyword>
<keyword id="KW-0732">Signal</keyword>
<keyword id="KW-0758">Storage protein</keyword>
<sequence length="284" mass="32840">MKVFILALLALTATTAIAQLDTTCSQGFRQYQQQQQPGQRQLLEQMRPCVAFLQQQCRPLRMPFLQTQVEQLSSCQIDQYQCCQQLAQIPEQIRCHAIHNVVEAIMQQQSQQHRQERQQQAQHKSMRMLLETLYLMCNIYVPIQCQQQQQLGQQQQQQLQEQLTPCATFLQHQCSPVTVPFPQIRVDQPTSCQNVQHQCCRQLSQIPEQYRCQAIHNVAEAIRHQQPQQQCQGMYQPQQPAKLESIRMSLQALRSMCRIYIPVQCPAPTAYNIPMVATYTGGAC</sequence>
<evidence type="ECO:0000250" key="1"/>
<evidence type="ECO:0000255" key="2"/>
<evidence type="ECO:0000305" key="3"/>
<feature type="signal peptide" evidence="2">
    <location>
        <begin position="1"/>
        <end position="18"/>
    </location>
</feature>
<feature type="chain" id="PRO_0000410692" description="Avenin-like b11">
    <location>
        <begin position="19"/>
        <end position="284"/>
    </location>
</feature>
<accession>B8YG97</accession>